<accession>A4SKP9</accession>
<proteinExistence type="inferred from homology"/>
<keyword id="KW-0997">Cell inner membrane</keyword>
<keyword id="KW-1003">Cell membrane</keyword>
<keyword id="KW-0201">Cytochrome c-type biogenesis</keyword>
<keyword id="KW-0349">Heme</keyword>
<keyword id="KW-0408">Iron</keyword>
<keyword id="KW-0472">Membrane</keyword>
<keyword id="KW-0479">Metal-binding</keyword>
<keyword id="KW-0735">Signal-anchor</keyword>
<keyword id="KW-0812">Transmembrane</keyword>
<keyword id="KW-1133">Transmembrane helix</keyword>
<gene>
    <name evidence="1" type="primary">ccmE</name>
    <name evidence="1" type="synonym">cycJ</name>
    <name type="ordered locus">ASA_1369</name>
</gene>
<comment type="function">
    <text evidence="1">Heme chaperone required for the biogenesis of c-type cytochromes. Transiently binds heme delivered by CcmC and transfers the heme to apo-cytochromes in a process facilitated by CcmF and CcmH.</text>
</comment>
<comment type="subcellular location">
    <subcellularLocation>
        <location evidence="1">Cell inner membrane</location>
        <topology evidence="1">Single-pass type II membrane protein</topology>
        <orientation evidence="1">Periplasmic side</orientation>
    </subcellularLocation>
</comment>
<comment type="similarity">
    <text evidence="1">Belongs to the CcmE/CycJ family.</text>
</comment>
<feature type="chain" id="PRO_1000070802" description="Cytochrome c-type biogenesis protein CcmE">
    <location>
        <begin position="1"/>
        <end position="163"/>
    </location>
</feature>
<feature type="topological domain" description="Cytoplasmic" evidence="1">
    <location>
        <begin position="1"/>
        <end position="8"/>
    </location>
</feature>
<feature type="transmembrane region" description="Helical; Signal-anchor for type II membrane protein" evidence="1">
    <location>
        <begin position="9"/>
        <end position="29"/>
    </location>
</feature>
<feature type="topological domain" description="Periplasmic" evidence="1">
    <location>
        <begin position="30"/>
        <end position="163"/>
    </location>
</feature>
<feature type="binding site" description="covalent" evidence="1">
    <location>
        <position position="131"/>
    </location>
    <ligand>
        <name>heme</name>
        <dbReference type="ChEBI" id="CHEBI:30413"/>
    </ligand>
</feature>
<feature type="binding site" description="axial binding residue" evidence="1">
    <location>
        <position position="135"/>
    </location>
    <ligand>
        <name>heme</name>
        <dbReference type="ChEBI" id="CHEBI:30413"/>
    </ligand>
    <ligandPart>
        <name>Fe</name>
        <dbReference type="ChEBI" id="CHEBI:18248"/>
    </ligandPart>
</feature>
<sequence length="163" mass="17752">MNPRRKKRLTIILAISAGLAAVIGLVLYALSQNIDLFYTPSELVEGKGPDKIKPEEGQRLRIGGLVVPGSVLRDQQSLKVAFKLVDNGGHLVTVEFDGILPDLFREGQGIVAQGTLKNATTVEAFEVLAKHDENYMPPEVADATNGMHFKPEYTEAQLKGAKQ</sequence>
<reference key="1">
    <citation type="journal article" date="2008" name="BMC Genomics">
        <title>The genome of Aeromonas salmonicida subsp. salmonicida A449: insights into the evolution of a fish pathogen.</title>
        <authorList>
            <person name="Reith M.E."/>
            <person name="Singh R.K."/>
            <person name="Curtis B."/>
            <person name="Boyd J.M."/>
            <person name="Bouevitch A."/>
            <person name="Kimball J."/>
            <person name="Munholland J."/>
            <person name="Murphy C."/>
            <person name="Sarty D."/>
            <person name="Williams J."/>
            <person name="Nash J.H."/>
            <person name="Johnson S.C."/>
            <person name="Brown L.L."/>
        </authorList>
    </citation>
    <scope>NUCLEOTIDE SEQUENCE [LARGE SCALE GENOMIC DNA]</scope>
    <source>
        <strain>A449</strain>
    </source>
</reference>
<dbReference type="EMBL" id="CP000644">
    <property type="protein sequence ID" value="ABO89471.1"/>
    <property type="molecule type" value="Genomic_DNA"/>
</dbReference>
<dbReference type="RefSeq" id="WP_005319256.1">
    <property type="nucleotide sequence ID" value="NC_009348.1"/>
</dbReference>
<dbReference type="SMR" id="A4SKP9"/>
<dbReference type="STRING" id="29491.GCA_000820065_03192"/>
<dbReference type="GeneID" id="79879022"/>
<dbReference type="KEGG" id="asa:ASA_1369"/>
<dbReference type="eggNOG" id="COG2332">
    <property type="taxonomic scope" value="Bacteria"/>
</dbReference>
<dbReference type="HOGENOM" id="CLU_079503_1_0_6"/>
<dbReference type="Proteomes" id="UP000000225">
    <property type="component" value="Chromosome"/>
</dbReference>
<dbReference type="GO" id="GO:0005886">
    <property type="term" value="C:plasma membrane"/>
    <property type="evidence" value="ECO:0007669"/>
    <property type="project" value="UniProtKB-SubCell"/>
</dbReference>
<dbReference type="GO" id="GO:0020037">
    <property type="term" value="F:heme binding"/>
    <property type="evidence" value="ECO:0007669"/>
    <property type="project" value="InterPro"/>
</dbReference>
<dbReference type="GO" id="GO:0046872">
    <property type="term" value="F:metal ion binding"/>
    <property type="evidence" value="ECO:0007669"/>
    <property type="project" value="UniProtKB-KW"/>
</dbReference>
<dbReference type="GO" id="GO:0017004">
    <property type="term" value="P:cytochrome complex assembly"/>
    <property type="evidence" value="ECO:0007669"/>
    <property type="project" value="UniProtKB-KW"/>
</dbReference>
<dbReference type="FunFam" id="2.40.50.140:FF:000104">
    <property type="entry name" value="Cytochrome c-type biogenesis protein CcmE"/>
    <property type="match status" value="1"/>
</dbReference>
<dbReference type="Gene3D" id="2.40.50.140">
    <property type="entry name" value="Nucleic acid-binding proteins"/>
    <property type="match status" value="1"/>
</dbReference>
<dbReference type="HAMAP" id="MF_01959">
    <property type="entry name" value="CcmE"/>
    <property type="match status" value="1"/>
</dbReference>
<dbReference type="InterPro" id="IPR004329">
    <property type="entry name" value="CcmE"/>
</dbReference>
<dbReference type="InterPro" id="IPR036127">
    <property type="entry name" value="CcmE-like_sf"/>
</dbReference>
<dbReference type="InterPro" id="IPR012340">
    <property type="entry name" value="NA-bd_OB-fold"/>
</dbReference>
<dbReference type="NCBIfam" id="NF009638">
    <property type="entry name" value="PRK13165.1"/>
    <property type="match status" value="1"/>
</dbReference>
<dbReference type="NCBIfam" id="NF009727">
    <property type="entry name" value="PRK13254.1-1"/>
    <property type="match status" value="1"/>
</dbReference>
<dbReference type="NCBIfam" id="NF009729">
    <property type="entry name" value="PRK13254.1-3"/>
    <property type="match status" value="1"/>
</dbReference>
<dbReference type="PANTHER" id="PTHR34128">
    <property type="entry name" value="CYTOCHROME C-TYPE BIOGENESIS PROTEIN CCME HOMOLOG, MITOCHONDRIAL"/>
    <property type="match status" value="1"/>
</dbReference>
<dbReference type="PANTHER" id="PTHR34128:SF2">
    <property type="entry name" value="CYTOCHROME C-TYPE BIOGENESIS PROTEIN CCME HOMOLOG, MITOCHONDRIAL"/>
    <property type="match status" value="1"/>
</dbReference>
<dbReference type="Pfam" id="PF03100">
    <property type="entry name" value="CcmE"/>
    <property type="match status" value="1"/>
</dbReference>
<dbReference type="SUPFAM" id="SSF82093">
    <property type="entry name" value="Heme chaperone CcmE"/>
    <property type="match status" value="1"/>
</dbReference>
<name>CCME_AERS4</name>
<organism>
    <name type="scientific">Aeromonas salmonicida (strain A449)</name>
    <dbReference type="NCBI Taxonomy" id="382245"/>
    <lineage>
        <taxon>Bacteria</taxon>
        <taxon>Pseudomonadati</taxon>
        <taxon>Pseudomonadota</taxon>
        <taxon>Gammaproteobacteria</taxon>
        <taxon>Aeromonadales</taxon>
        <taxon>Aeromonadaceae</taxon>
        <taxon>Aeromonas</taxon>
    </lineage>
</organism>
<protein>
    <recommendedName>
        <fullName evidence="1">Cytochrome c-type biogenesis protein CcmE</fullName>
    </recommendedName>
    <alternativeName>
        <fullName evidence="1">Cytochrome c maturation protein E</fullName>
    </alternativeName>
    <alternativeName>
        <fullName evidence="1">Heme chaperone CcmE</fullName>
    </alternativeName>
</protein>
<evidence type="ECO:0000255" key="1">
    <source>
        <dbReference type="HAMAP-Rule" id="MF_01959"/>
    </source>
</evidence>